<accession>P0C9W0</accession>
<evidence type="ECO:0000250" key="1">
    <source>
        <dbReference type="UniProtKB" id="P23169"/>
    </source>
</evidence>
<evidence type="ECO:0000255" key="2"/>
<evidence type="ECO:0000305" key="3"/>
<reference key="1">
    <citation type="submission" date="2003-03" db="EMBL/GenBank/DDBJ databases">
        <title>African swine fever virus genomes.</title>
        <authorList>
            <person name="Kutish G.F."/>
            <person name="Rock D.L."/>
        </authorList>
    </citation>
    <scope>NUCLEOTIDE SEQUENCE [LARGE SCALE GENOMIC DNA]</scope>
</reference>
<feature type="chain" id="PRO_0000373364" description="Inner membrane protein p22">
    <location>
        <begin position="1"/>
        <end position="174"/>
    </location>
</feature>
<feature type="topological domain" description="Intravirion" evidence="2">
    <location>
        <begin position="1"/>
        <end position="7"/>
    </location>
</feature>
<feature type="transmembrane region" description="Helical" evidence="2">
    <location>
        <begin position="8"/>
        <end position="28"/>
    </location>
</feature>
<feature type="topological domain" description="Virion surface" evidence="2">
    <location>
        <begin position="29"/>
        <end position="174"/>
    </location>
</feature>
<sequence length="174" mass="19910">MLHIKMTISTLLIALIVLLIIILVVFLYHKKQQPPKKVCKVDKDCGSGEHCVRGTCSSLSCLDAVKMDKRDVKMDSKISSCKFTPNFYHFTDTAAEQEFGKTWHSIKITPSPGESHTSQEICERYCLWGTDDCTGWEYFGDEKDGTCNVYTNPYLALKYTKDHVLYLPRNHKYA</sequence>
<protein>
    <recommendedName>
        <fullName>Inner membrane protein p22</fullName>
    </recommendedName>
</protein>
<organism>
    <name type="scientific">African swine fever virus (isolate Pig/Kenya/KEN-50/1950)</name>
    <name type="common">ASFV</name>
    <dbReference type="NCBI Taxonomy" id="561445"/>
    <lineage>
        <taxon>Viruses</taxon>
        <taxon>Varidnaviria</taxon>
        <taxon>Bamfordvirae</taxon>
        <taxon>Nucleocytoviricota</taxon>
        <taxon>Pokkesviricetes</taxon>
        <taxon>Asfuvirales</taxon>
        <taxon>Asfarviridae</taxon>
        <taxon>Asfivirus</taxon>
        <taxon>African swine fever virus</taxon>
    </lineage>
</organism>
<comment type="subcellular location">
    <subcellularLocation>
        <location evidence="1">Virion membrane</location>
        <topology evidence="2">Single-pass membrane protein</topology>
    </subcellularLocation>
    <subcellularLocation>
        <location evidence="1">Host cell membrane</location>
        <topology evidence="2">Single-pass membrane protein</topology>
    </subcellularLocation>
    <text evidence="1">Part of the virion inner membrane.</text>
</comment>
<comment type="induction">
    <text evidence="1">Expressed in the late phase of the viral replicative cycle.</text>
</comment>
<comment type="similarity">
    <text evidence="3">Belongs to the asfivirus inner membrane protein p22 family.</text>
</comment>
<organismHost>
    <name type="scientific">Ornithodoros</name>
    <name type="common">relapsing fever ticks</name>
    <dbReference type="NCBI Taxonomy" id="6937"/>
</organismHost>
<organismHost>
    <name type="scientific">Phacochoerus aethiopicus</name>
    <name type="common">Warthog</name>
    <dbReference type="NCBI Taxonomy" id="85517"/>
</organismHost>
<organismHost>
    <name type="scientific">Phacochoerus africanus</name>
    <name type="common">Warthog</name>
    <dbReference type="NCBI Taxonomy" id="41426"/>
</organismHost>
<organismHost>
    <name type="scientific">Potamochoerus larvatus</name>
    <name type="common">Bushpig</name>
    <dbReference type="NCBI Taxonomy" id="273792"/>
</organismHost>
<organismHost>
    <name type="scientific">Sus scrofa</name>
    <name type="common">Pig</name>
    <dbReference type="NCBI Taxonomy" id="9823"/>
</organismHost>
<keyword id="KW-0244">Early protein</keyword>
<keyword id="KW-1032">Host cell membrane</keyword>
<keyword id="KW-1043">Host membrane</keyword>
<keyword id="KW-0472">Membrane</keyword>
<keyword id="KW-0812">Transmembrane</keyword>
<keyword id="KW-1133">Transmembrane helix</keyword>
<keyword id="KW-0946">Virion</keyword>
<dbReference type="EMBL" id="AY261360">
    <property type="status" value="NOT_ANNOTATED_CDS"/>
    <property type="molecule type" value="Genomic_DNA"/>
</dbReference>
<dbReference type="SMR" id="P0C9W0"/>
<dbReference type="Proteomes" id="UP000000861">
    <property type="component" value="Segment"/>
</dbReference>
<dbReference type="GO" id="GO:0020002">
    <property type="term" value="C:host cell plasma membrane"/>
    <property type="evidence" value="ECO:0007669"/>
    <property type="project" value="UniProtKB-SubCell"/>
</dbReference>
<dbReference type="GO" id="GO:0016020">
    <property type="term" value="C:membrane"/>
    <property type="evidence" value="ECO:0007669"/>
    <property type="project" value="UniProtKB-KW"/>
</dbReference>
<dbReference type="GO" id="GO:0055036">
    <property type="term" value="C:virion membrane"/>
    <property type="evidence" value="ECO:0007669"/>
    <property type="project" value="UniProtKB-SubCell"/>
</dbReference>
<proteinExistence type="inferred from homology"/>
<gene>
    <name type="ordered locus">Ken-004</name>
</gene>
<name>P22_ASFK5</name>